<name>STXA_BP933</name>
<keyword id="KW-0002">3D-structure</keyword>
<keyword id="KW-1015">Disulfide bond</keyword>
<keyword id="KW-0378">Hydrolase</keyword>
<keyword id="KW-1254">Modulation of host virulence by virus</keyword>
<keyword id="KW-0652">Protein synthesis inhibitor</keyword>
<keyword id="KW-1185">Reference proteome</keyword>
<keyword id="KW-0964">Secreted</keyword>
<keyword id="KW-0732">Signal</keyword>
<keyword id="KW-0800">Toxin</keyword>
<keyword id="KW-1255">Viral exotoxin</keyword>
<keyword id="KW-0843">Virulence</keyword>
<organismHost>
    <name type="scientific">Escherichia coli O157:H7</name>
    <dbReference type="NCBI Taxonomy" id="83334"/>
</organismHost>
<feature type="signal peptide" evidence="2">
    <location>
        <begin position="1"/>
        <end position="22"/>
    </location>
</feature>
<feature type="chain" id="PRO_0000030792" description="Shiga-like toxin 2 subunit A">
    <location>
        <begin position="23"/>
        <end position="319"/>
    </location>
</feature>
<feature type="region of interest" description="A1" evidence="1">
    <location>
        <begin position="23"/>
        <end position="272"/>
    </location>
</feature>
<feature type="region of interest" description="A2" evidence="1">
    <location>
        <begin position="273"/>
        <end position="314"/>
    </location>
</feature>
<feature type="active site" evidence="1">
    <location>
        <position position="189"/>
    </location>
</feature>
<feature type="site" description="Cleavage; by furin" evidence="1">
    <location>
        <begin position="272"/>
        <end position="273"/>
    </location>
</feature>
<feature type="disulfide bond">
    <location>
        <begin position="263"/>
        <end position="282"/>
    </location>
</feature>
<feature type="sequence variant" description="In strain: OX3:H21.">
    <original>S</original>
    <variation>P</variation>
    <location>
        <position position="17"/>
    </location>
</feature>
<feature type="sequence variant" description="In strain: OX3:H21.">
    <original>T</original>
    <variation>M</variation>
    <location>
        <position position="26"/>
    </location>
</feature>
<feature type="sequence variant" description="In strain: FLY16 and CS1718.">
    <original>E</original>
    <variation>D</variation>
    <location>
        <position position="277"/>
    </location>
</feature>
<feature type="strand" evidence="4">
    <location>
        <begin position="24"/>
        <end position="28"/>
    </location>
</feature>
<feature type="helix" evidence="4">
    <location>
        <begin position="32"/>
        <end position="46"/>
    </location>
</feature>
<feature type="strand" evidence="4">
    <location>
        <begin position="47"/>
        <end position="55"/>
    </location>
</feature>
<feature type="strand" evidence="4">
    <location>
        <begin position="58"/>
        <end position="63"/>
    </location>
</feature>
<feature type="strand" evidence="4">
    <location>
        <begin position="71"/>
        <end position="77"/>
    </location>
</feature>
<feature type="strand" evidence="4">
    <location>
        <begin position="89"/>
        <end position="94"/>
    </location>
</feature>
<feature type="turn" evidence="4">
    <location>
        <begin position="95"/>
        <end position="97"/>
    </location>
</feature>
<feature type="strand" evidence="4">
    <location>
        <begin position="100"/>
        <end position="105"/>
    </location>
</feature>
<feature type="turn" evidence="4">
    <location>
        <begin position="106"/>
        <end position="109"/>
    </location>
</feature>
<feature type="strand" evidence="4">
    <location>
        <begin position="110"/>
        <end position="113"/>
    </location>
</feature>
<feature type="helix" evidence="4">
    <location>
        <begin position="115"/>
        <end position="117"/>
    </location>
</feature>
<feature type="strand" evidence="4">
    <location>
        <begin position="125"/>
        <end position="129"/>
    </location>
</feature>
<feature type="helix" evidence="4">
    <location>
        <begin position="136"/>
        <end position="143"/>
    </location>
</feature>
<feature type="helix" evidence="4">
    <location>
        <begin position="154"/>
        <end position="166"/>
    </location>
</feature>
<feature type="strand" evidence="4">
    <location>
        <begin position="169"/>
        <end position="171"/>
    </location>
</feature>
<feature type="helix" evidence="4">
    <location>
        <begin position="174"/>
        <end position="186"/>
    </location>
</feature>
<feature type="helix" evidence="4">
    <location>
        <begin position="188"/>
        <end position="192"/>
    </location>
</feature>
<feature type="helix" evidence="4">
    <location>
        <begin position="194"/>
        <end position="201"/>
    </location>
</feature>
<feature type="helix" evidence="4">
    <location>
        <begin position="202"/>
        <end position="204"/>
    </location>
</feature>
<feature type="helix" evidence="4">
    <location>
        <begin position="215"/>
        <end position="222"/>
    </location>
</feature>
<feature type="helix" evidence="4">
    <location>
        <begin position="224"/>
        <end position="230"/>
    </location>
</feature>
<feature type="helix" evidence="4">
    <location>
        <begin position="231"/>
        <end position="233"/>
    </location>
</feature>
<feature type="strand" evidence="5">
    <location>
        <begin position="236"/>
        <end position="238"/>
    </location>
</feature>
<feature type="strand" evidence="4">
    <location>
        <begin position="240"/>
        <end position="242"/>
    </location>
</feature>
<feature type="strand" evidence="4">
    <location>
        <begin position="245"/>
        <end position="247"/>
    </location>
</feature>
<feature type="helix" evidence="4">
    <location>
        <begin position="250"/>
        <end position="256"/>
    </location>
</feature>
<feature type="strand" evidence="4">
    <location>
        <begin position="284"/>
        <end position="287"/>
    </location>
</feature>
<feature type="strand" evidence="4">
    <location>
        <begin position="290"/>
        <end position="293"/>
    </location>
</feature>
<feature type="strand" evidence="4">
    <location>
        <begin position="296"/>
        <end position="299"/>
    </location>
</feature>
<feature type="helix" evidence="4">
    <location>
        <begin position="300"/>
        <end position="306"/>
    </location>
</feature>
<feature type="helix" evidence="4">
    <location>
        <begin position="312"/>
        <end position="317"/>
    </location>
</feature>
<comment type="function">
    <text>The A subunit is responsible for inhibiting protein synthesis through the catalytic inactivation of 60S ribosomal subunits. After endocytosis, the A subunit is cleaved by furin in two fragments, A1 and A2: A1 is the catalytically active fragment, and A2 is essential for holotoxin assembly with the B subunits.</text>
</comment>
<comment type="catalytic activity">
    <reaction>
        <text>Endohydrolysis of the N-glycosidic bond at one specific adenosine on the 28S rRNA.</text>
        <dbReference type="EC" id="3.2.2.22"/>
    </reaction>
</comment>
<comment type="subunit">
    <text>Shiga-like toxin contains a single A subunit and multiple copies of a B subunit.</text>
</comment>
<comment type="subcellular location">
    <subcellularLocation>
        <location>Secreted</location>
    </subcellularLocation>
</comment>
<comment type="similarity">
    <text evidence="3">Belongs to the ribosome-inactivating protein family.</text>
</comment>
<accession>P09385</accession>
<accession>Q9R398</accession>
<dbReference type="EC" id="3.2.2.22"/>
<dbReference type="EMBL" id="X07865">
    <property type="protein sequence ID" value="CAA30714.1"/>
    <property type="molecule type" value="Genomic_DNA"/>
</dbReference>
<dbReference type="EMBL" id="M59432">
    <property type="protein sequence ID" value="AAA19623.1"/>
    <property type="molecule type" value="Unassigned_DNA"/>
</dbReference>
<dbReference type="EMBL" id="L11079">
    <property type="protein sequence ID" value="AAA16362.1"/>
    <property type="molecule type" value="Unassigned_DNA"/>
</dbReference>
<dbReference type="EMBL" id="Y10775">
    <property type="protein sequence ID" value="CAA71747.1"/>
    <property type="molecule type" value="Genomic_DNA"/>
</dbReference>
<dbReference type="EMBL" id="AB017524">
    <property type="protein sequence ID" value="BAA33759.1"/>
    <property type="molecule type" value="Genomic_DNA"/>
</dbReference>
<dbReference type="EMBL" id="AB015057">
    <property type="protein sequence ID" value="BAA34372.1"/>
    <property type="molecule type" value="Genomic_DNA"/>
</dbReference>
<dbReference type="EMBL" id="AF461167">
    <property type="protein sequence ID" value="AAM70033.1"/>
    <property type="molecule type" value="Genomic_DNA"/>
</dbReference>
<dbReference type="EMBL" id="AB048239">
    <property type="protein sequence ID" value="BAB83026.1"/>
    <property type="molecule type" value="Genomic_DNA"/>
</dbReference>
<dbReference type="EMBL" id="AB048240">
    <property type="protein sequence ID" value="BAB83028.1"/>
    <property type="molecule type" value="Genomic_DNA"/>
</dbReference>
<dbReference type="EMBL" id="AY443052">
    <property type="protein sequence ID" value="AAS07596.1"/>
    <property type="molecule type" value="Genomic_DNA"/>
</dbReference>
<dbReference type="EMBL" id="AF125520">
    <property type="protein sequence ID" value="AAD25445.1"/>
    <property type="molecule type" value="Genomic_DNA"/>
</dbReference>
<dbReference type="PIR" id="I76713">
    <property type="entry name" value="I76713"/>
</dbReference>
<dbReference type="PIR" id="S01032">
    <property type="entry name" value="S01032"/>
</dbReference>
<dbReference type="RefSeq" id="NP_049500.1">
    <property type="nucleotide sequence ID" value="NC_000924.1"/>
</dbReference>
<dbReference type="PDB" id="1R4P">
    <property type="method" value="X-ray"/>
    <property type="resolution" value="1.77 A"/>
    <property type="chains" value="A=23-319"/>
</dbReference>
<dbReference type="PDB" id="2GA4">
    <property type="method" value="X-ray"/>
    <property type="resolution" value="1.80 A"/>
    <property type="chains" value="A=23-319"/>
</dbReference>
<dbReference type="PDB" id="7UJJ">
    <property type="method" value="EM"/>
    <property type="resolution" value="6.50 A"/>
    <property type="chains" value="A=23-319"/>
</dbReference>
<dbReference type="PDB" id="8SZ2">
    <property type="method" value="X-ray"/>
    <property type="resolution" value="2.01 A"/>
    <property type="chains" value="A/B=23-272"/>
</dbReference>
<dbReference type="PDBsum" id="1R4P"/>
<dbReference type="PDBsum" id="2GA4"/>
<dbReference type="PDBsum" id="7UJJ"/>
<dbReference type="PDBsum" id="8SZ2"/>
<dbReference type="EMDB" id="EMD-26563"/>
<dbReference type="SMR" id="P09385"/>
<dbReference type="IntAct" id="P09385">
    <property type="interactions" value="1"/>
</dbReference>
<dbReference type="ChEMBL" id="CHEMBL4662932"/>
<dbReference type="GeneID" id="1261950"/>
<dbReference type="KEGG" id="vg:1261950"/>
<dbReference type="OrthoDB" id="4295at10239"/>
<dbReference type="EvolutionaryTrace" id="P09385"/>
<dbReference type="Proteomes" id="UP000002135">
    <property type="component" value="Genome"/>
</dbReference>
<dbReference type="GO" id="GO:0005576">
    <property type="term" value="C:extracellular region"/>
    <property type="evidence" value="ECO:0007669"/>
    <property type="project" value="UniProtKB-SubCell"/>
</dbReference>
<dbReference type="GO" id="GO:0030598">
    <property type="term" value="F:rRNA N-glycosylase activity"/>
    <property type="evidence" value="ECO:0007669"/>
    <property type="project" value="UniProtKB-EC"/>
</dbReference>
<dbReference type="GO" id="GO:0090729">
    <property type="term" value="F:toxin activity"/>
    <property type="evidence" value="ECO:0007669"/>
    <property type="project" value="UniProtKB-KW"/>
</dbReference>
<dbReference type="GO" id="GO:0017148">
    <property type="term" value="P:negative regulation of translation"/>
    <property type="evidence" value="ECO:0007669"/>
    <property type="project" value="UniProtKB-KW"/>
</dbReference>
<dbReference type="GO" id="GO:0098676">
    <property type="term" value="P:symbiont-mediated modulation of host virulence"/>
    <property type="evidence" value="ECO:0007669"/>
    <property type="project" value="UniProtKB-KW"/>
</dbReference>
<dbReference type="Gene3D" id="3.40.420.10">
    <property type="entry name" value="Ricin (A subunit), domain 1"/>
    <property type="match status" value="1"/>
</dbReference>
<dbReference type="Gene3D" id="4.10.470.10">
    <property type="entry name" value="Ricin (A Subunit), domain 2"/>
    <property type="match status" value="1"/>
</dbReference>
<dbReference type="InterPro" id="IPR036041">
    <property type="entry name" value="Ribosome-inact_prot_sf"/>
</dbReference>
<dbReference type="InterPro" id="IPR001574">
    <property type="entry name" value="Ribosome_inactivat_prot"/>
</dbReference>
<dbReference type="InterPro" id="IPR017988">
    <property type="entry name" value="Ribosome_inactivat_prot_CS"/>
</dbReference>
<dbReference type="InterPro" id="IPR016138">
    <property type="entry name" value="Ribosome_inactivat_prot_sub1"/>
</dbReference>
<dbReference type="InterPro" id="IPR016139">
    <property type="entry name" value="Ribosome_inactivat_prot_sub2"/>
</dbReference>
<dbReference type="InterPro" id="IPR016331">
    <property type="entry name" value="Shiga-like_toxin_subunit_A"/>
</dbReference>
<dbReference type="NCBIfam" id="NF041702">
    <property type="entry name" value="Shig_StxA_2_acd"/>
    <property type="match status" value="1"/>
</dbReference>
<dbReference type="NCBIfam" id="NF033661">
    <property type="entry name" value="Shiga_Stx2A"/>
    <property type="match status" value="1"/>
</dbReference>
<dbReference type="PANTHER" id="PTHR33453">
    <property type="match status" value="1"/>
</dbReference>
<dbReference type="PANTHER" id="PTHR33453:SF34">
    <property type="entry name" value="RIBOSOME-INACTIVATING PROTEIN"/>
    <property type="match status" value="1"/>
</dbReference>
<dbReference type="Pfam" id="PF00161">
    <property type="entry name" value="RIP"/>
    <property type="match status" value="1"/>
</dbReference>
<dbReference type="PIRSF" id="PIRSF001924">
    <property type="entry name" value="Shigella_toxin_subunit_A"/>
    <property type="match status" value="1"/>
</dbReference>
<dbReference type="SUPFAM" id="SSF56371">
    <property type="entry name" value="Ribosome inactivating proteins (RIP)"/>
    <property type="match status" value="1"/>
</dbReference>
<dbReference type="PROSITE" id="PS00275">
    <property type="entry name" value="SHIGA_RICIN"/>
    <property type="match status" value="1"/>
</dbReference>
<protein>
    <recommendedName>
        <fullName>Shiga-like toxin 2 subunit A</fullName>
        <shortName>SLT-2 A subunit</shortName>
        <shortName>SLT-2a</shortName>
        <shortName>SLT-IIa</shortName>
        <ecNumber>3.2.2.22</ecNumber>
    </recommendedName>
    <alternativeName>
        <fullName>Verocytotoxin 2 subunit A</fullName>
    </alternativeName>
    <alternativeName>
        <fullName>Verotoxin 2 subunit A</fullName>
    </alternativeName>
    <alternativeName>
        <fullName>rRNA N-glycosidase 2</fullName>
    </alternativeName>
</protein>
<sequence length="319" mass="35714">MKCILFKWVLCLLLGFSSVSYSREFTIDFSTQQSYVSSLNSIRTEISTPLEHISQGTTSVSVINHTPPGSYFAVDIRGLDVYQARFDHLRLIIEQNNLYVAGFVNTATNTFYRFSDFTHISVPGVTTVSMTTDSSYTTLQRVAALERSGMQISRHSLVSSYLALMEFSGNTMTRDASRAVLRFVTVTAEALRFRQIQREFRQALSETAPVYTMTPGDVDLTLNWGRISNVLPEYRGEDGVRVGRISFNNISAILGTVAVILNCHHQGARSVRAVNEESQPECQITGDRPVIKINNTLWESNTAAAFLNRKSQFLYTTGK</sequence>
<reference key="1">
    <citation type="journal article" date="1987" name="FEMS Microbiol. Lett.">
        <title>Nucleotide sequence analysis and comparison of the structural genes for Shiga-like toxin I and Shiga-like toxin II encoded by bacteriophages from Escherichia coli 933.</title>
        <authorList>
            <person name="Jackson M.P."/>
            <person name="Neill R.J."/>
            <person name="O'Brien A.D."/>
            <person name="Holmes R.K."/>
            <person name="Newland J.W."/>
        </authorList>
    </citation>
    <scope>NUCLEOTIDE SEQUENCE [GENOMIC DNA]</scope>
</reference>
<reference key="2">
    <citation type="journal article" date="1991" name="Infect. Immun.">
        <title>Two copies of Shiga-like toxin II-related genes common in enterohemorrhagic Escherichia coli strains are responsible for the antigenic heterogeneity of the O157:H-strain E32511.</title>
        <authorList>
            <person name="Schmitt C.K."/>
            <person name="McKee M.L."/>
            <person name="O'Brien A.D."/>
        </authorList>
    </citation>
    <scope>NUCLEOTIDE SEQUENCE [GENOMIC DNA]</scope>
    <source>
        <strain>E32511</strain>
    </source>
</reference>
<reference key="3">
    <citation type="journal article" date="1993" name="Microb. Pathog.">
        <title>Polymerase chain reaction amplification, cloning and sequencing of variant Escherichia coli Shiga-like toxin type II operons.</title>
        <authorList>
            <person name="Paton A.W."/>
            <person name="Paton J.C."/>
            <person name="Manning P.A."/>
        </authorList>
    </citation>
    <scope>NUCLEOTIDE SEQUENCE [GENOMIC DNA]</scope>
    <source>
        <strain>OX3:H21</strain>
    </source>
</reference>
<reference key="4">
    <citation type="journal article" date="1997" name="FEMS Microbiol. Lett.">
        <title>An ileX tRNA gene is located close to the Shiga toxin II operon in enterohemorrhagic Escherichia coli O157 and non-O157 strains.</title>
        <authorList>
            <person name="Schmidt H."/>
            <person name="Scheef J."/>
            <person name="Janetzki-Mittmann C."/>
            <person name="Datz M."/>
            <person name="Karch H."/>
        </authorList>
    </citation>
    <scope>NUCLEOTIDE SEQUENCE [GENOMIC DNA]</scope>
</reference>
<reference key="5">
    <citation type="journal article" date="1999" name="J. Biosci. Bioeng.">
        <title>Identification of an insertion sequence, IS1203 variant, in a Shiga toxin 2 gene of Escherichia coli O157:H7.</title>
        <authorList>
            <person name="Kusumoto M."/>
            <person name="Nishiya Y."/>
            <person name="Kawamura Y."/>
            <person name="Shinagawa K."/>
        </authorList>
    </citation>
    <scope>NUCLEOTIDE SEQUENCE [GENOMIC DNA]</scope>
</reference>
<reference key="6">
    <citation type="journal article" date="1999" name="J. Med. Entomol.">
        <title>Detection of Escherichia coli O157:H7 from Musca domestica (Diptera: Muscidae) at a cattle farm in Japan.</title>
        <authorList>
            <person name="Iwasa M."/>
            <person name="Makino S."/>
            <person name="Asakura H."/>
            <person name="Kobori H."/>
            <person name="Morimoto Y."/>
        </authorList>
    </citation>
    <scope>NUCLEOTIDE SEQUENCE [GENOMIC DNA]</scope>
    <source>
        <strain>FLY16</strain>
    </source>
</reference>
<reference key="7">
    <citation type="submission" date="2001-12" db="EMBL/GenBank/DDBJ databases">
        <title>Characterization of Shiga toxin genes in Shiga toxin-producing Escherichia coli isolated in Korea.</title>
        <authorList>
            <person name="Yu J.Y."/>
            <person name="Jeon H.G."/>
            <person name="Kang Y.H."/>
            <person name="Kim E.C."/>
            <person name="Sohn C.K."/>
            <person name="Lee B.K."/>
        </authorList>
    </citation>
    <scope>NUCLEOTIDE SEQUENCE [GENOMIC DNA]</scope>
    <source>
        <strain>CS1718</strain>
    </source>
</reference>
<reference key="8">
    <citation type="journal article" date="2001" name="Epidemiol. Infect.">
        <title>Phylogenetic diversity and similarity of active sites of Shiga toxin (stx) in Shiga toxin-producing Escherichia coli (STEC) isolates from humans and animals.</title>
        <authorList>
            <person name="Asakura H."/>
            <person name="Makino S."/>
            <person name="Kobori H."/>
            <person name="Watarai M."/>
            <person name="Shirahata T."/>
            <person name="Ikeda T."/>
            <person name="Takeshi K."/>
        </authorList>
    </citation>
    <scope>NUCLEOTIDE SEQUENCE [GENOMIC DNA]</scope>
</reference>
<reference key="9">
    <citation type="journal article" date="2004" name="Appl. Environ. Microbiol.">
        <title>Genetic typing of shiga toxin 2 variants of Escherichia coli by PCR-restriction fragment length polymorphism analysis.</title>
        <authorList>
            <person name="De Baets L."/>
            <person name="Van der Taelen I."/>
            <person name="De Filette M."/>
            <person name="Pierard D."/>
            <person name="Allison L."/>
            <person name="De Greve H."/>
            <person name="Hernalsteens J.P."/>
            <person name="Imberechts H."/>
        </authorList>
    </citation>
    <scope>NUCLEOTIDE SEQUENCE [GENOMIC DNA]</scope>
</reference>
<reference key="10">
    <citation type="journal article" date="1999" name="J. Bacteriol.">
        <title>Sequence of Shiga toxin 2 phage 933W from Escherichia coli O157:H7: Shiga toxin as a phage late-gene product.</title>
        <authorList>
            <person name="Plunkett G. III"/>
            <person name="Rose D.J."/>
            <person name="Durfee T.J."/>
            <person name="Blattner F.R."/>
        </authorList>
    </citation>
    <scope>NUCLEOTIDE SEQUENCE [LARGE SCALE GENOMIC DNA]</scope>
</reference>
<reference key="11">
    <citation type="journal article" date="1996" name="Infect. Immun.">
        <title>Regulation of the Shiga-like toxin II operon in Escherichia coli.</title>
        <authorList>
            <person name="Muhldorfer I."/>
            <person name="Hacker J."/>
            <person name="Keusch G.T."/>
            <person name="Acheson D.W."/>
            <person name="Tschape H."/>
            <person name="Kane A.V."/>
            <person name="Ritter A."/>
            <person name="Olschlager T."/>
            <person name="Donohue-Rolfe A."/>
        </authorList>
    </citation>
    <scope>INDUCTION</scope>
</reference>
<reference key="12">
    <citation type="journal article" date="2004" name="J. Biol. Chem.">
        <title>Structure of shiga toxin type 2 (Stx2) from Escherichia coli O157:H7.</title>
        <authorList>
            <person name="Fraser M.E."/>
            <person name="Fujinaga M."/>
            <person name="Cherney M.M."/>
            <person name="Melton-Celsa A.R."/>
            <person name="Twiddy E.M."/>
            <person name="O'Brien A.D."/>
            <person name="James M.N.G."/>
        </authorList>
    </citation>
    <scope>X-RAY CRYSTALLOGRAPHY (1.77 ANGSTROMS) OF 23-319</scope>
</reference>
<evidence type="ECO:0000250" key="1"/>
<evidence type="ECO:0000255" key="2"/>
<evidence type="ECO:0000305" key="3"/>
<evidence type="ECO:0007829" key="4">
    <source>
        <dbReference type="PDB" id="1R4P"/>
    </source>
</evidence>
<evidence type="ECO:0007829" key="5">
    <source>
        <dbReference type="PDB" id="8SZ2"/>
    </source>
</evidence>
<gene>
    <name type="primary">stxA2</name>
    <name type="synonym">stx2A</name>
    <name type="ordered locus">L0103</name>
</gene>
<organism>
    <name type="scientific">Escherichia phage 933W</name>
    <name type="common">Bacteriophage 933W</name>
    <dbReference type="NCBI Taxonomy" id="10730"/>
    <lineage>
        <taxon>Viruses</taxon>
        <taxon>Duplodnaviria</taxon>
        <taxon>Heunggongvirae</taxon>
        <taxon>Uroviricota</taxon>
        <taxon>Caudoviricetes</taxon>
        <taxon>Sepvirinae</taxon>
        <taxon>Traversvirus</taxon>
        <taxon>Traversvirus tv933W</taxon>
    </lineage>
</organism>
<proteinExistence type="evidence at protein level"/>